<feature type="signal peptide" evidence="2">
    <location>
        <begin position="1"/>
        <end position="25"/>
    </location>
</feature>
<feature type="propeptide" id="PRO_0000353070" evidence="1">
    <location>
        <begin position="26"/>
        <end position="77"/>
    </location>
</feature>
<feature type="peptide" id="PRO_0000353071" description="Calcitonin receptor-stimulating peptide 1">
    <location>
        <begin position="80"/>
        <end position="125"/>
    </location>
</feature>
<feature type="disulfide bond" evidence="1">
    <location>
        <begin position="81"/>
        <end position="86"/>
    </location>
</feature>
<feature type="splice variant" id="VSP_035622" description="In isoform 2." evidence="4">
    <original>IQKRACNTATCMTHRLAGWLSRSGSMVRSNLLPTKMGFKIFNGPRRNSWF</original>
    <variation>PFLFLYAANQHPEESLQHCHLHDPSPGRLAEQIWEYGEEQLAADQDGFQDLQWAPQELLVLNSEMTLGIRSPGS</variation>
    <location>
        <begin position="76"/>
        <end position="125"/>
    </location>
</feature>
<keyword id="KW-0025">Alternative splicing</keyword>
<keyword id="KW-0165">Cleavage on pair of basic residues</keyword>
<keyword id="KW-1015">Disulfide bond</keyword>
<keyword id="KW-0675">Receptor</keyword>
<keyword id="KW-1185">Reference proteome</keyword>
<keyword id="KW-0964">Secreted</keyword>
<keyword id="KW-0732">Signal</keyword>
<sequence>MGFWKFPPFLVLSILVLYQAGMFHAAPFRSVFDGRFDPATLDEEESRLLLAAMVNDYEQMRARESEKAQKTEGSRIQKRACNTATCMTHRLAGWLSRSGSMVRSNLLPTKMGFKIFNGPRRNSWF</sequence>
<protein>
    <recommendedName>
        <fullName>Calcitonin receptor-stimulating peptide 1</fullName>
        <shortName>CRSP-1</shortName>
    </recommendedName>
</protein>
<comment type="function">
    <text evidence="3">Stimulates cAMP production in porcine kidney cell line LLC-PK1 via the calcitonin receptor (CT) but not via the CT-like (CL) receptor.</text>
</comment>
<comment type="subcellular location">
    <subcellularLocation>
        <location evidence="1">Secreted</location>
    </subcellularLocation>
</comment>
<comment type="alternative products">
    <event type="alternative splicing"/>
    <isoform>
        <id>Q75V95-1</id>
        <name>1</name>
        <sequence type="displayed"/>
    </isoform>
    <isoform>
        <id>Q75V95-2</id>
        <name>2</name>
        <sequence type="described" ref="VSP_035622"/>
    </isoform>
</comment>
<comment type="similarity">
    <text evidence="5">Belongs to the calcitonin family.</text>
</comment>
<name>CRSP1_BOVIN</name>
<evidence type="ECO:0000250" key="1"/>
<evidence type="ECO:0000255" key="2"/>
<evidence type="ECO:0000269" key="3">
    <source>
    </source>
</evidence>
<evidence type="ECO:0000303" key="4">
    <source ref="2"/>
</evidence>
<evidence type="ECO:0000305" key="5"/>
<accession>Q75V95</accession>
<accession>Q17Q98</accession>
<proteinExistence type="evidence at transcript level"/>
<organism>
    <name type="scientific">Bos taurus</name>
    <name type="common">Bovine</name>
    <dbReference type="NCBI Taxonomy" id="9913"/>
    <lineage>
        <taxon>Eukaryota</taxon>
        <taxon>Metazoa</taxon>
        <taxon>Chordata</taxon>
        <taxon>Craniata</taxon>
        <taxon>Vertebrata</taxon>
        <taxon>Euteleostomi</taxon>
        <taxon>Mammalia</taxon>
        <taxon>Eutheria</taxon>
        <taxon>Laurasiatheria</taxon>
        <taxon>Artiodactyla</taxon>
        <taxon>Ruminantia</taxon>
        <taxon>Pecora</taxon>
        <taxon>Bovidae</taxon>
        <taxon>Bovinae</taxon>
        <taxon>Bos</taxon>
    </lineage>
</organism>
<dbReference type="EMBL" id="AB125101">
    <property type="protein sequence ID" value="BAD05115.1"/>
    <property type="molecule type" value="mRNA"/>
</dbReference>
<dbReference type="EMBL" id="BC118475">
    <property type="protein sequence ID" value="AAI18476.1"/>
    <property type="molecule type" value="mRNA"/>
</dbReference>
<dbReference type="RefSeq" id="NP_001001149.1">
    <molecule id="Q75V95-1"/>
    <property type="nucleotide sequence ID" value="NM_001001149.2"/>
</dbReference>
<dbReference type="RefSeq" id="NP_001128134.1">
    <molecule id="Q75V95-2"/>
    <property type="nucleotide sequence ID" value="NM_001134662.1"/>
</dbReference>
<dbReference type="SMR" id="Q75V95"/>
<dbReference type="FunCoup" id="Q75V95">
    <property type="interactions" value="19"/>
</dbReference>
<dbReference type="STRING" id="9913.ENSBTAP00000062157"/>
<dbReference type="PaxDb" id="9913-ENSBTAP00000001987"/>
<dbReference type="Ensembl" id="ENSBTAT00000001987.5">
    <molecule id="Q75V95-2"/>
    <property type="protein sequence ID" value="ENSBTAP00000001987.4"/>
    <property type="gene ID" value="ENSBTAG00000001516.6"/>
</dbReference>
<dbReference type="GeneID" id="407218"/>
<dbReference type="KEGG" id="bta:407218"/>
<dbReference type="VEuPathDB" id="HostDB:ENSBTAG00000001516"/>
<dbReference type="eggNOG" id="ENOG502SQMP">
    <property type="taxonomic scope" value="Eukaryota"/>
</dbReference>
<dbReference type="GeneTree" id="ENSGT00940000166205"/>
<dbReference type="HOGENOM" id="CLU_1748985_0_0_1"/>
<dbReference type="InParanoid" id="Q75V95"/>
<dbReference type="OrthoDB" id="9929923at2759"/>
<dbReference type="TreeFam" id="TF333069"/>
<dbReference type="Proteomes" id="UP000009136">
    <property type="component" value="Chromosome 15"/>
</dbReference>
<dbReference type="Bgee" id="ENSBTAG00000001516">
    <property type="expression patterns" value="Expressed in thyroid gland and 25 other cell types or tissues"/>
</dbReference>
<dbReference type="GO" id="GO:0005615">
    <property type="term" value="C:extracellular space"/>
    <property type="evidence" value="ECO:0000318"/>
    <property type="project" value="GO_Central"/>
</dbReference>
<dbReference type="GO" id="GO:0031716">
    <property type="term" value="F:calcitonin receptor binding"/>
    <property type="evidence" value="ECO:0000318"/>
    <property type="project" value="GO_Central"/>
</dbReference>
<dbReference type="GO" id="GO:0005179">
    <property type="term" value="F:hormone activity"/>
    <property type="evidence" value="ECO:0007669"/>
    <property type="project" value="InterPro"/>
</dbReference>
<dbReference type="GO" id="GO:0007189">
    <property type="term" value="P:adenylate cyclase-activating G protein-coupled receptor signaling pathway"/>
    <property type="evidence" value="ECO:0000318"/>
    <property type="project" value="GO_Central"/>
</dbReference>
<dbReference type="GO" id="GO:0051480">
    <property type="term" value="P:regulation of cytosolic calcium ion concentration"/>
    <property type="evidence" value="ECO:0000318"/>
    <property type="project" value="GO_Central"/>
</dbReference>
<dbReference type="Gene3D" id="6.10.250.2190">
    <property type="match status" value="1"/>
</dbReference>
<dbReference type="InterPro" id="IPR021117">
    <property type="entry name" value="Calcitonin-like"/>
</dbReference>
<dbReference type="InterPro" id="IPR021116">
    <property type="entry name" value="Calcitonin/adrenomedullin"/>
</dbReference>
<dbReference type="InterPro" id="IPR018360">
    <property type="entry name" value="Calcitonin_CS"/>
</dbReference>
<dbReference type="InterPro" id="IPR015476">
    <property type="entry name" value="Calcitonin_gene-rel_peptide"/>
</dbReference>
<dbReference type="InterPro" id="IPR001693">
    <property type="entry name" value="Calcitonin_peptide-like"/>
</dbReference>
<dbReference type="PANTHER" id="PTHR10505:SF13">
    <property type="entry name" value="CALCITONIN GENE-RELATED PEPTIDE 1"/>
    <property type="match status" value="1"/>
</dbReference>
<dbReference type="PANTHER" id="PTHR10505">
    <property type="entry name" value="CALCITONIN-RELATED"/>
    <property type="match status" value="1"/>
</dbReference>
<dbReference type="Pfam" id="PF00214">
    <property type="entry name" value="Calc_CGRP_IAPP"/>
    <property type="match status" value="1"/>
</dbReference>
<dbReference type="PRINTS" id="PR00817">
    <property type="entry name" value="CALCITONINB"/>
</dbReference>
<dbReference type="SMART" id="SM00113">
    <property type="entry name" value="CALCITONIN"/>
    <property type="match status" value="1"/>
</dbReference>
<dbReference type="PROSITE" id="PS00258">
    <property type="entry name" value="CALCITONIN"/>
    <property type="match status" value="1"/>
</dbReference>
<gene>
    <name type="primary">CRSP1</name>
</gene>
<reference key="1">
    <citation type="journal article" date="2004" name="Biochem. Biophys. Res. Commun.">
        <title>Identification, structural determination, and biological activity of bovine and canine calcitonin receptor-stimulating peptides.</title>
        <authorList>
            <person name="Katafuchi T."/>
            <person name="Hamano K."/>
            <person name="Minamino N."/>
        </authorList>
    </citation>
    <scope>NUCLEOTIDE SEQUENCE [MRNA] (ISOFORM 1)</scope>
    <scope>FUNCTION</scope>
    <source>
        <tissue>Thyroid</tissue>
    </source>
</reference>
<reference key="2">
    <citation type="submission" date="2006-06" db="EMBL/GenBank/DDBJ databases">
        <authorList>
            <consortium name="NIH - Mammalian Gene Collection (MGC) project"/>
        </authorList>
    </citation>
    <scope>NUCLEOTIDE SEQUENCE [LARGE SCALE MRNA] (ISOFORM 2)</scope>
    <source>
        <strain>Hereford</strain>
        <tissue>Fetal medulla</tissue>
    </source>
</reference>